<proteinExistence type="inferred from homology"/>
<keyword id="KW-0349">Heme</keyword>
<keyword id="KW-0376">Hydrogen peroxide</keyword>
<keyword id="KW-0408">Iron</keyword>
<keyword id="KW-0479">Metal-binding</keyword>
<keyword id="KW-0560">Oxidoreductase</keyword>
<keyword id="KW-0575">Peroxidase</keyword>
<keyword id="KW-1185">Reference proteome</keyword>
<name>KATG_ERWT9</name>
<feature type="chain" id="PRO_0000354774" description="Catalase-peroxidase">
    <location>
        <begin position="1"/>
        <end position="729"/>
    </location>
</feature>
<feature type="region of interest" description="Disordered" evidence="2">
    <location>
        <begin position="1"/>
        <end position="33"/>
    </location>
</feature>
<feature type="compositionally biased region" description="Basic and acidic residues" evidence="2">
    <location>
        <begin position="15"/>
        <end position="25"/>
    </location>
</feature>
<feature type="active site" description="Proton acceptor" evidence="1">
    <location>
        <position position="109"/>
    </location>
</feature>
<feature type="binding site" description="axial binding residue" evidence="1">
    <location>
        <position position="270"/>
    </location>
    <ligand>
        <name>heme b</name>
        <dbReference type="ChEBI" id="CHEBI:60344"/>
    </ligand>
    <ligandPart>
        <name>Fe</name>
        <dbReference type="ChEBI" id="CHEBI:18248"/>
    </ligandPart>
</feature>
<feature type="site" description="Transition state stabilizer" evidence="1">
    <location>
        <position position="105"/>
    </location>
</feature>
<feature type="cross-link" description="Tryptophyl-tyrosyl-methioninium (Trp-Tyr) (with M-255)" evidence="1">
    <location>
        <begin position="108"/>
        <end position="229"/>
    </location>
</feature>
<feature type="cross-link" description="Tryptophyl-tyrosyl-methioninium (Tyr-Met) (with W-108)" evidence="1">
    <location>
        <begin position="229"/>
        <end position="255"/>
    </location>
</feature>
<sequence length="729" mass="79907">MSAHNTNESAVGKCPFHEQKEEKSVLARGAGGGTSNRDWWPEQLRVDLLNQHSRRSNPLNEHFNYREEFAKLDYPQLKADLKSLLNDSQEWWPADWGSYIGLFIRMAWHSAGTYRTVDGRGGSGRGQQRFAPLNAWPDNVSLDKARRLLWPVKQKYGQKISWADLYILAGNVALENSGFRTFGFAAGREDVWEPDLDINWGEEKEWLTHRHPESLANAPLGATEMGLIYVNPEGPEASGNPASAAPAIRATFGNMGMNDEEIVALIAGGHTLGKTHGAGEASHVGVDPEAAPLESQGLGWTSSYGSGSGADAITSGLEVIWTQTPTQWSNYFFENLFKYEWVQTHSPAGAIQFEAQDAQASIPDPFDADKKRKPTMLVTDLTLRFDPEFEKISRRFLQDPQSFNEAFARAWFKLTHRDMGPKARYLGPEVPKEDLIWQDPLPAPVHQPSPGEINDVKAQIAQSGLSVSELVSVAWASASTFRGGDKRGGANGARLALAPQKEWPVNAIASRALPQLQAIQQASGKISLADTLVLAGVVGIEQAAAAAGVSIDVPFTPGRVDARQEQTDIDSFDLLQPLADGFRNYRRVTGGPSTETLLIDKAQQLTLSTPELTVLVGGLRVLGTNFDGGKHGVLTEHAGVLSNDFFVNLLDMRTAWRAADDSAELFEGYDRKSGEVRYSATRADLVFGSNAILRASAEVYASADAQQKFITDFVAAWGKVMDLDRFDIR</sequence>
<accession>B2VFG0</accession>
<reference key="1">
    <citation type="journal article" date="2008" name="Environ. Microbiol.">
        <title>The genome of Erwinia tasmaniensis strain Et1/99, a non-pathogenic bacterium in the genus Erwinia.</title>
        <authorList>
            <person name="Kube M."/>
            <person name="Migdoll A.M."/>
            <person name="Mueller I."/>
            <person name="Kuhl H."/>
            <person name="Beck A."/>
            <person name="Reinhardt R."/>
            <person name="Geider K."/>
        </authorList>
    </citation>
    <scope>NUCLEOTIDE SEQUENCE [LARGE SCALE GENOMIC DNA]</scope>
    <source>
        <strain>DSM 17950 / CFBP 7177 / CIP 109463 / NCPPB 4357 / Et1/99</strain>
    </source>
</reference>
<gene>
    <name evidence="1" type="primary">katG</name>
    <name type="ordered locus">ETA_14080</name>
</gene>
<dbReference type="EC" id="1.11.1.21" evidence="1"/>
<dbReference type="EMBL" id="CU468135">
    <property type="protein sequence ID" value="CAO96454.1"/>
    <property type="molecule type" value="Genomic_DNA"/>
</dbReference>
<dbReference type="RefSeq" id="WP_012441148.1">
    <property type="nucleotide sequence ID" value="NC_010694.1"/>
</dbReference>
<dbReference type="SMR" id="B2VFG0"/>
<dbReference type="STRING" id="465817.ETA_14080"/>
<dbReference type="KEGG" id="eta:ETA_14080"/>
<dbReference type="eggNOG" id="COG0376">
    <property type="taxonomic scope" value="Bacteria"/>
</dbReference>
<dbReference type="HOGENOM" id="CLU_025424_2_0_6"/>
<dbReference type="OrthoDB" id="9759743at2"/>
<dbReference type="Proteomes" id="UP000001726">
    <property type="component" value="Chromosome"/>
</dbReference>
<dbReference type="GO" id="GO:0005829">
    <property type="term" value="C:cytosol"/>
    <property type="evidence" value="ECO:0007669"/>
    <property type="project" value="TreeGrafter"/>
</dbReference>
<dbReference type="GO" id="GO:0004096">
    <property type="term" value="F:catalase activity"/>
    <property type="evidence" value="ECO:0007669"/>
    <property type="project" value="UniProtKB-UniRule"/>
</dbReference>
<dbReference type="GO" id="GO:0020037">
    <property type="term" value="F:heme binding"/>
    <property type="evidence" value="ECO:0007669"/>
    <property type="project" value="InterPro"/>
</dbReference>
<dbReference type="GO" id="GO:0046872">
    <property type="term" value="F:metal ion binding"/>
    <property type="evidence" value="ECO:0007669"/>
    <property type="project" value="UniProtKB-KW"/>
</dbReference>
<dbReference type="GO" id="GO:0070301">
    <property type="term" value="P:cellular response to hydrogen peroxide"/>
    <property type="evidence" value="ECO:0007669"/>
    <property type="project" value="TreeGrafter"/>
</dbReference>
<dbReference type="GO" id="GO:0042744">
    <property type="term" value="P:hydrogen peroxide catabolic process"/>
    <property type="evidence" value="ECO:0007669"/>
    <property type="project" value="UniProtKB-KW"/>
</dbReference>
<dbReference type="FunFam" id="1.10.420.10:FF:000002">
    <property type="entry name" value="Catalase-peroxidase"/>
    <property type="match status" value="1"/>
</dbReference>
<dbReference type="FunFam" id="1.10.420.10:FF:000004">
    <property type="entry name" value="Catalase-peroxidase"/>
    <property type="match status" value="1"/>
</dbReference>
<dbReference type="FunFam" id="1.10.520.10:FF:000002">
    <property type="entry name" value="Catalase-peroxidase"/>
    <property type="match status" value="1"/>
</dbReference>
<dbReference type="Gene3D" id="1.10.520.10">
    <property type="match status" value="2"/>
</dbReference>
<dbReference type="Gene3D" id="1.10.420.10">
    <property type="entry name" value="Peroxidase, domain 2"/>
    <property type="match status" value="2"/>
</dbReference>
<dbReference type="HAMAP" id="MF_01961">
    <property type="entry name" value="Catal_peroxid"/>
    <property type="match status" value="1"/>
</dbReference>
<dbReference type="InterPro" id="IPR000763">
    <property type="entry name" value="Catalase_peroxidase"/>
</dbReference>
<dbReference type="InterPro" id="IPR002016">
    <property type="entry name" value="Haem_peroxidase"/>
</dbReference>
<dbReference type="InterPro" id="IPR010255">
    <property type="entry name" value="Haem_peroxidase_sf"/>
</dbReference>
<dbReference type="NCBIfam" id="TIGR00198">
    <property type="entry name" value="cat_per_HPI"/>
    <property type="match status" value="1"/>
</dbReference>
<dbReference type="NCBIfam" id="NF011635">
    <property type="entry name" value="PRK15061.1"/>
    <property type="match status" value="1"/>
</dbReference>
<dbReference type="PANTHER" id="PTHR30555:SF0">
    <property type="entry name" value="CATALASE-PEROXIDASE"/>
    <property type="match status" value="1"/>
</dbReference>
<dbReference type="PANTHER" id="PTHR30555">
    <property type="entry name" value="HYDROPEROXIDASE I, BIFUNCTIONAL CATALASE-PEROXIDASE"/>
    <property type="match status" value="1"/>
</dbReference>
<dbReference type="Pfam" id="PF00141">
    <property type="entry name" value="peroxidase"/>
    <property type="match status" value="2"/>
</dbReference>
<dbReference type="PRINTS" id="PR00460">
    <property type="entry name" value="BPEROXIDASE"/>
</dbReference>
<dbReference type="PRINTS" id="PR00458">
    <property type="entry name" value="PEROXIDASE"/>
</dbReference>
<dbReference type="SUPFAM" id="SSF48113">
    <property type="entry name" value="Heme-dependent peroxidases"/>
    <property type="match status" value="2"/>
</dbReference>
<dbReference type="PROSITE" id="PS50873">
    <property type="entry name" value="PEROXIDASE_4"/>
    <property type="match status" value="1"/>
</dbReference>
<organism>
    <name type="scientific">Erwinia tasmaniensis (strain DSM 17950 / CFBP 7177 / CIP 109463 / NCPPB 4357 / Et1/99)</name>
    <dbReference type="NCBI Taxonomy" id="465817"/>
    <lineage>
        <taxon>Bacteria</taxon>
        <taxon>Pseudomonadati</taxon>
        <taxon>Pseudomonadota</taxon>
        <taxon>Gammaproteobacteria</taxon>
        <taxon>Enterobacterales</taxon>
        <taxon>Erwiniaceae</taxon>
        <taxon>Erwinia</taxon>
    </lineage>
</organism>
<comment type="function">
    <text evidence="1">Bifunctional enzyme with both catalase and broad-spectrum peroxidase activity.</text>
</comment>
<comment type="catalytic activity">
    <reaction evidence="1">
        <text>H2O2 + AH2 = A + 2 H2O</text>
        <dbReference type="Rhea" id="RHEA:30275"/>
        <dbReference type="ChEBI" id="CHEBI:13193"/>
        <dbReference type="ChEBI" id="CHEBI:15377"/>
        <dbReference type="ChEBI" id="CHEBI:16240"/>
        <dbReference type="ChEBI" id="CHEBI:17499"/>
        <dbReference type="EC" id="1.11.1.21"/>
    </reaction>
</comment>
<comment type="catalytic activity">
    <reaction evidence="1">
        <text>2 H2O2 = O2 + 2 H2O</text>
        <dbReference type="Rhea" id="RHEA:20309"/>
        <dbReference type="ChEBI" id="CHEBI:15377"/>
        <dbReference type="ChEBI" id="CHEBI:15379"/>
        <dbReference type="ChEBI" id="CHEBI:16240"/>
        <dbReference type="EC" id="1.11.1.21"/>
    </reaction>
</comment>
<comment type="cofactor">
    <cofactor evidence="1">
        <name>heme b</name>
        <dbReference type="ChEBI" id="CHEBI:60344"/>
    </cofactor>
    <text evidence="1">Binds 1 heme b (iron(II)-protoporphyrin IX) group per dimer.</text>
</comment>
<comment type="subunit">
    <text evidence="1">Homodimer or homotetramer.</text>
</comment>
<comment type="PTM">
    <text evidence="1">Formation of the three residue Trp-Tyr-Met cross-link is important for the catalase, but not the peroxidase activity of the enzyme.</text>
</comment>
<comment type="similarity">
    <text evidence="1">Belongs to the peroxidase family. Peroxidase/catalase subfamily.</text>
</comment>
<protein>
    <recommendedName>
        <fullName evidence="1">Catalase-peroxidase</fullName>
        <shortName evidence="1">CP</shortName>
        <ecNumber evidence="1">1.11.1.21</ecNumber>
    </recommendedName>
    <alternativeName>
        <fullName evidence="1">Peroxidase/catalase</fullName>
    </alternativeName>
</protein>
<evidence type="ECO:0000255" key="1">
    <source>
        <dbReference type="HAMAP-Rule" id="MF_01961"/>
    </source>
</evidence>
<evidence type="ECO:0000256" key="2">
    <source>
        <dbReference type="SAM" id="MobiDB-lite"/>
    </source>
</evidence>